<protein>
    <recommendedName>
        <fullName evidence="1">Fluoride-specific ion channel FluC</fullName>
    </recommendedName>
</protein>
<dbReference type="EMBL" id="CP000472">
    <property type="protein sequence ID" value="ACJ29327.1"/>
    <property type="molecule type" value="Genomic_DNA"/>
</dbReference>
<dbReference type="RefSeq" id="WP_020912683.1">
    <property type="nucleotide sequence ID" value="NC_011566.1"/>
</dbReference>
<dbReference type="SMR" id="B8CP83"/>
<dbReference type="STRING" id="225849.swp_2588"/>
<dbReference type="KEGG" id="swp:swp_2588"/>
<dbReference type="eggNOG" id="COG0239">
    <property type="taxonomic scope" value="Bacteria"/>
</dbReference>
<dbReference type="HOGENOM" id="CLU_114342_3_0_6"/>
<dbReference type="OrthoDB" id="9806299at2"/>
<dbReference type="Proteomes" id="UP000000753">
    <property type="component" value="Chromosome"/>
</dbReference>
<dbReference type="GO" id="GO:0005886">
    <property type="term" value="C:plasma membrane"/>
    <property type="evidence" value="ECO:0007669"/>
    <property type="project" value="UniProtKB-SubCell"/>
</dbReference>
<dbReference type="GO" id="GO:0062054">
    <property type="term" value="F:fluoride channel activity"/>
    <property type="evidence" value="ECO:0007669"/>
    <property type="project" value="UniProtKB-UniRule"/>
</dbReference>
<dbReference type="GO" id="GO:0046872">
    <property type="term" value="F:metal ion binding"/>
    <property type="evidence" value="ECO:0007669"/>
    <property type="project" value="UniProtKB-KW"/>
</dbReference>
<dbReference type="GO" id="GO:0140114">
    <property type="term" value="P:cellular detoxification of fluoride"/>
    <property type="evidence" value="ECO:0007669"/>
    <property type="project" value="UniProtKB-UniRule"/>
</dbReference>
<dbReference type="HAMAP" id="MF_00454">
    <property type="entry name" value="FluC"/>
    <property type="match status" value="1"/>
</dbReference>
<dbReference type="InterPro" id="IPR003691">
    <property type="entry name" value="FluC"/>
</dbReference>
<dbReference type="NCBIfam" id="TIGR00494">
    <property type="entry name" value="crcB"/>
    <property type="match status" value="1"/>
</dbReference>
<dbReference type="PANTHER" id="PTHR28259">
    <property type="entry name" value="FLUORIDE EXPORT PROTEIN 1-RELATED"/>
    <property type="match status" value="1"/>
</dbReference>
<dbReference type="PANTHER" id="PTHR28259:SF1">
    <property type="entry name" value="FLUORIDE EXPORT PROTEIN 1-RELATED"/>
    <property type="match status" value="1"/>
</dbReference>
<dbReference type="Pfam" id="PF02537">
    <property type="entry name" value="CRCB"/>
    <property type="match status" value="1"/>
</dbReference>
<reference key="1">
    <citation type="journal article" date="2008" name="PLoS ONE">
        <title>Environmental adaptation: genomic analysis of the piezotolerant and psychrotolerant deep-sea iron reducing bacterium Shewanella piezotolerans WP3.</title>
        <authorList>
            <person name="Wang F."/>
            <person name="Wang J."/>
            <person name="Jian H."/>
            <person name="Zhang B."/>
            <person name="Li S."/>
            <person name="Wang F."/>
            <person name="Zeng X."/>
            <person name="Gao L."/>
            <person name="Bartlett D.H."/>
            <person name="Yu J."/>
            <person name="Hu S."/>
            <person name="Xiao X."/>
        </authorList>
    </citation>
    <scope>NUCLEOTIDE SEQUENCE [LARGE SCALE GENOMIC DNA]</scope>
    <source>
        <strain>WP3 / JCM 13877</strain>
    </source>
</reference>
<name>FLUC_SHEPW</name>
<organism>
    <name type="scientific">Shewanella piezotolerans (strain WP3 / JCM 13877)</name>
    <dbReference type="NCBI Taxonomy" id="225849"/>
    <lineage>
        <taxon>Bacteria</taxon>
        <taxon>Pseudomonadati</taxon>
        <taxon>Pseudomonadota</taxon>
        <taxon>Gammaproteobacteria</taxon>
        <taxon>Alteromonadales</taxon>
        <taxon>Shewanellaceae</taxon>
        <taxon>Shewanella</taxon>
    </lineage>
</organism>
<evidence type="ECO:0000255" key="1">
    <source>
        <dbReference type="HAMAP-Rule" id="MF_00454"/>
    </source>
</evidence>
<sequence>MNNVLFVALGGSIGAVLRYLISILMLQVFGSGFPFGTLMVNILGSFLMGVVYALGQVSEVSPEIKAFIGVGMLGALTTFSTFSNESLLLMQEGYLVKAILNVVVNVGVCIFVVYLGQQLVFSRY</sequence>
<proteinExistence type="inferred from homology"/>
<keyword id="KW-0997">Cell inner membrane</keyword>
<keyword id="KW-1003">Cell membrane</keyword>
<keyword id="KW-0407">Ion channel</keyword>
<keyword id="KW-0406">Ion transport</keyword>
<keyword id="KW-0472">Membrane</keyword>
<keyword id="KW-0479">Metal-binding</keyword>
<keyword id="KW-0915">Sodium</keyword>
<keyword id="KW-0812">Transmembrane</keyword>
<keyword id="KW-1133">Transmembrane helix</keyword>
<keyword id="KW-0813">Transport</keyword>
<gene>
    <name evidence="1" type="primary">fluC</name>
    <name evidence="1" type="synonym">crcB</name>
    <name type="ordered locus">swp_2588</name>
</gene>
<comment type="function">
    <text evidence="1">Fluoride-specific ion channel. Important for reducing fluoride concentration in the cell, thus reducing its toxicity.</text>
</comment>
<comment type="catalytic activity">
    <reaction evidence="1">
        <text>fluoride(in) = fluoride(out)</text>
        <dbReference type="Rhea" id="RHEA:76159"/>
        <dbReference type="ChEBI" id="CHEBI:17051"/>
    </reaction>
    <physiologicalReaction direction="left-to-right" evidence="1">
        <dbReference type="Rhea" id="RHEA:76160"/>
    </physiologicalReaction>
</comment>
<comment type="activity regulation">
    <text evidence="1">Na(+) is not transported, but it plays an essential structural role and its presence is essential for fluoride channel function.</text>
</comment>
<comment type="subcellular location">
    <subcellularLocation>
        <location evidence="1">Cell inner membrane</location>
        <topology evidence="1">Multi-pass membrane protein</topology>
    </subcellularLocation>
</comment>
<comment type="similarity">
    <text evidence="1">Belongs to the fluoride channel Fluc/FEX (TC 1.A.43) family.</text>
</comment>
<accession>B8CP83</accession>
<feature type="chain" id="PRO_1000125158" description="Fluoride-specific ion channel FluC">
    <location>
        <begin position="1"/>
        <end position="124"/>
    </location>
</feature>
<feature type="transmembrane region" description="Helical" evidence="1">
    <location>
        <begin position="5"/>
        <end position="27"/>
    </location>
</feature>
<feature type="transmembrane region" description="Helical" evidence="1">
    <location>
        <begin position="42"/>
        <end position="62"/>
    </location>
</feature>
<feature type="transmembrane region" description="Helical" evidence="1">
    <location>
        <begin position="63"/>
        <end position="83"/>
    </location>
</feature>
<feature type="transmembrane region" description="Helical" evidence="1">
    <location>
        <begin position="95"/>
        <end position="115"/>
    </location>
</feature>
<feature type="binding site" evidence="1">
    <location>
        <position position="74"/>
    </location>
    <ligand>
        <name>Na(+)</name>
        <dbReference type="ChEBI" id="CHEBI:29101"/>
        <note>structural</note>
    </ligand>
</feature>
<feature type="binding site" evidence="1">
    <location>
        <position position="77"/>
    </location>
    <ligand>
        <name>Na(+)</name>
        <dbReference type="ChEBI" id="CHEBI:29101"/>
        <note>structural</note>
    </ligand>
</feature>